<name>PYRI_PARD8</name>
<organism>
    <name type="scientific">Parabacteroides distasonis (strain ATCC 8503 / DSM 20701 / CIP 104284 / JCM 5825 / NCTC 11152)</name>
    <dbReference type="NCBI Taxonomy" id="435591"/>
    <lineage>
        <taxon>Bacteria</taxon>
        <taxon>Pseudomonadati</taxon>
        <taxon>Bacteroidota</taxon>
        <taxon>Bacteroidia</taxon>
        <taxon>Bacteroidales</taxon>
        <taxon>Tannerellaceae</taxon>
        <taxon>Parabacteroides</taxon>
    </lineage>
</organism>
<sequence>MSAEKKKELQVAALENGTAIDHIPPSQLFKVASLLGLEKMNNTITIGNNFHSNKMGCKGMIKIADKFFEEDEINRIAMIAPNIILNIIRDYEVVEKKTVTLPDELIGLVKCNNPKCITNNEPMLSRFHVIDKEKGTIKCHYCERKINKEDIIIK</sequence>
<proteinExistence type="inferred from homology"/>
<protein>
    <recommendedName>
        <fullName evidence="1">Aspartate carbamoyltransferase regulatory chain</fullName>
    </recommendedName>
</protein>
<keyword id="KW-0479">Metal-binding</keyword>
<keyword id="KW-0665">Pyrimidine biosynthesis</keyword>
<keyword id="KW-1185">Reference proteome</keyword>
<keyword id="KW-0862">Zinc</keyword>
<gene>
    <name evidence="1" type="primary">pyrI</name>
    <name type="ordered locus">BDI_0840</name>
</gene>
<evidence type="ECO:0000255" key="1">
    <source>
        <dbReference type="HAMAP-Rule" id="MF_00002"/>
    </source>
</evidence>
<dbReference type="EMBL" id="CP000140">
    <property type="protein sequence ID" value="ABR42610.1"/>
    <property type="molecule type" value="Genomic_DNA"/>
</dbReference>
<dbReference type="RefSeq" id="WP_005857324.1">
    <property type="nucleotide sequence ID" value="NC_009615.1"/>
</dbReference>
<dbReference type="SMR" id="A6LA96"/>
<dbReference type="STRING" id="435591.BDI_0840"/>
<dbReference type="PaxDb" id="435591-BDI_0840"/>
<dbReference type="GeneID" id="93525870"/>
<dbReference type="KEGG" id="pdi:BDI_0840"/>
<dbReference type="eggNOG" id="COG1781">
    <property type="taxonomic scope" value="Bacteria"/>
</dbReference>
<dbReference type="HOGENOM" id="CLU_128576_0_0_10"/>
<dbReference type="BioCyc" id="PDIS435591:G1G5A-860-MONOMER"/>
<dbReference type="Proteomes" id="UP000000566">
    <property type="component" value="Chromosome"/>
</dbReference>
<dbReference type="GO" id="GO:0009347">
    <property type="term" value="C:aspartate carbamoyltransferase complex"/>
    <property type="evidence" value="ECO:0007669"/>
    <property type="project" value="InterPro"/>
</dbReference>
<dbReference type="GO" id="GO:0046872">
    <property type="term" value="F:metal ion binding"/>
    <property type="evidence" value="ECO:0007669"/>
    <property type="project" value="UniProtKB-KW"/>
</dbReference>
<dbReference type="GO" id="GO:0006207">
    <property type="term" value="P:'de novo' pyrimidine nucleobase biosynthetic process"/>
    <property type="evidence" value="ECO:0007669"/>
    <property type="project" value="InterPro"/>
</dbReference>
<dbReference type="GO" id="GO:0006221">
    <property type="term" value="P:pyrimidine nucleotide biosynthetic process"/>
    <property type="evidence" value="ECO:0007669"/>
    <property type="project" value="UniProtKB-UniRule"/>
</dbReference>
<dbReference type="Gene3D" id="2.30.30.20">
    <property type="entry name" value="Aspartate carbamoyltransferase regulatory subunit, C-terminal domain"/>
    <property type="match status" value="1"/>
</dbReference>
<dbReference type="Gene3D" id="3.30.70.140">
    <property type="entry name" value="Aspartate carbamoyltransferase regulatory subunit, N-terminal domain"/>
    <property type="match status" value="1"/>
</dbReference>
<dbReference type="HAMAP" id="MF_00002">
    <property type="entry name" value="Asp_carb_tr_reg"/>
    <property type="match status" value="1"/>
</dbReference>
<dbReference type="InterPro" id="IPR020545">
    <property type="entry name" value="Asp_carbamoyltransf_reg_N"/>
</dbReference>
<dbReference type="InterPro" id="IPR002801">
    <property type="entry name" value="Asp_carbamoylTrfase_reg"/>
</dbReference>
<dbReference type="InterPro" id="IPR020542">
    <property type="entry name" value="Asp_carbamoyltrfase_reg_C"/>
</dbReference>
<dbReference type="InterPro" id="IPR036792">
    <property type="entry name" value="Asp_carbatrfase_reg_C_sf"/>
</dbReference>
<dbReference type="InterPro" id="IPR036793">
    <property type="entry name" value="Asp_carbatrfase_reg_N_sf"/>
</dbReference>
<dbReference type="NCBIfam" id="TIGR00240">
    <property type="entry name" value="ATCase_reg"/>
    <property type="match status" value="1"/>
</dbReference>
<dbReference type="PANTHER" id="PTHR35805">
    <property type="entry name" value="ASPARTATE CARBAMOYLTRANSFERASE REGULATORY CHAIN"/>
    <property type="match status" value="1"/>
</dbReference>
<dbReference type="PANTHER" id="PTHR35805:SF1">
    <property type="entry name" value="ASPARTATE CARBAMOYLTRANSFERASE REGULATORY CHAIN"/>
    <property type="match status" value="1"/>
</dbReference>
<dbReference type="Pfam" id="PF01948">
    <property type="entry name" value="PyrI"/>
    <property type="match status" value="1"/>
</dbReference>
<dbReference type="Pfam" id="PF02748">
    <property type="entry name" value="PyrI_C"/>
    <property type="match status" value="1"/>
</dbReference>
<dbReference type="SUPFAM" id="SSF57825">
    <property type="entry name" value="Aspartate carbamoyltransferase, Regulatory-chain, C-terminal domain"/>
    <property type="match status" value="1"/>
</dbReference>
<dbReference type="SUPFAM" id="SSF54893">
    <property type="entry name" value="Aspartate carbamoyltransferase, Regulatory-chain, N-terminal domain"/>
    <property type="match status" value="1"/>
</dbReference>
<comment type="function">
    <text evidence="1">Involved in allosteric regulation of aspartate carbamoyltransferase.</text>
</comment>
<comment type="cofactor">
    <cofactor evidence="1">
        <name>Zn(2+)</name>
        <dbReference type="ChEBI" id="CHEBI:29105"/>
    </cofactor>
    <text evidence="1">Binds 1 zinc ion per subunit.</text>
</comment>
<comment type="subunit">
    <text evidence="1">Contains catalytic and regulatory chains.</text>
</comment>
<comment type="similarity">
    <text evidence="1">Belongs to the PyrI family.</text>
</comment>
<feature type="chain" id="PRO_0000321496" description="Aspartate carbamoyltransferase regulatory chain">
    <location>
        <begin position="1"/>
        <end position="154"/>
    </location>
</feature>
<feature type="binding site" evidence="1">
    <location>
        <position position="111"/>
    </location>
    <ligand>
        <name>Zn(2+)</name>
        <dbReference type="ChEBI" id="CHEBI:29105"/>
    </ligand>
</feature>
<feature type="binding site" evidence="1">
    <location>
        <position position="116"/>
    </location>
    <ligand>
        <name>Zn(2+)</name>
        <dbReference type="ChEBI" id="CHEBI:29105"/>
    </ligand>
</feature>
<feature type="binding site" evidence="1">
    <location>
        <position position="139"/>
    </location>
    <ligand>
        <name>Zn(2+)</name>
        <dbReference type="ChEBI" id="CHEBI:29105"/>
    </ligand>
</feature>
<feature type="binding site" evidence="1">
    <location>
        <position position="142"/>
    </location>
    <ligand>
        <name>Zn(2+)</name>
        <dbReference type="ChEBI" id="CHEBI:29105"/>
    </ligand>
</feature>
<reference key="1">
    <citation type="journal article" date="2007" name="PLoS Biol.">
        <title>Evolution of symbiotic bacteria in the distal human intestine.</title>
        <authorList>
            <person name="Xu J."/>
            <person name="Mahowald M.A."/>
            <person name="Ley R.E."/>
            <person name="Lozupone C.A."/>
            <person name="Hamady M."/>
            <person name="Martens E.C."/>
            <person name="Henrissat B."/>
            <person name="Coutinho P.M."/>
            <person name="Minx P."/>
            <person name="Latreille P."/>
            <person name="Cordum H."/>
            <person name="Van Brunt A."/>
            <person name="Kim K."/>
            <person name="Fulton R.S."/>
            <person name="Fulton L.A."/>
            <person name="Clifton S.W."/>
            <person name="Wilson R.K."/>
            <person name="Knight R.D."/>
            <person name="Gordon J.I."/>
        </authorList>
    </citation>
    <scope>NUCLEOTIDE SEQUENCE [LARGE SCALE GENOMIC DNA]</scope>
    <source>
        <strain>ATCC 8503 / DSM 20701 / CIP 104284 / JCM 5825 / NCTC 11152</strain>
    </source>
</reference>
<accession>A6LA96</accession>